<keyword id="KW-0966">Cell projection</keyword>
<keyword id="KW-0969">Cilium</keyword>
<keyword id="KW-0970">Cilium biogenesis/degradation</keyword>
<keyword id="KW-0433">Leucine-rich repeat</keyword>
<keyword id="KW-1185">Reference proteome</keyword>
<keyword id="KW-0677">Repeat</keyword>
<comment type="function">
    <text evidence="1">Required for the assembly of dynein arms.</text>
</comment>
<comment type="subunit">
    <text evidence="2">Interacts with IFT88.</text>
</comment>
<comment type="subcellular location">
    <subcellularLocation>
        <location evidence="1">Cell projection</location>
        <location evidence="1">Cilium</location>
    </subcellularLocation>
</comment>
<comment type="similarity">
    <text evidence="4">Belongs to the LRRC56 family.</text>
</comment>
<sequence length="548" mass="60488">MDPAWDGSQGSRPGTASIRVRELSWQGLNNPQPQNKRLGSHGDIYRERRVEEHLSPARLQALAQVDDLQLVRVLEMCVDTRKNSLGNFGMHLPNLIQLKLNHSCLGSLRDLGTSLGQLQVLWLARCGLTDLDGIGSFLALKELYVSYNNISDLSPLCLLEQLEVLDLEGNNVEDLGQMRYLQLCPRLTTLTLEGNLVCLKPDPGPSNKAPQDYNYRAEVKKLIPQLHILDEVPTTCTNLPAPQKLSQDWLMVKEAIKEGNVLDILLPRLECSHGATIRKFDPTLPVPETQPWALSLLVPEGPLPEGLLSENPAAEDHASNLTHGPGQVLCGNPTKGLRERRNQYQEWAPLEQLPPHRPDLAIRPSTLRPDPAESCDLSMTGLRAWREPGLRPLLQRQLEFQQERLTHVQAQDPQKAPIEQEDQTGPKTSLTPLRLASELSRTSGFHLIPSPPKYPMPPESGISSLGRSADLPFRGRRLRVLGSLGPSLGEGSVLGERLALRALEVSSDPSHRAQGCPDPKPSLGPATCPLGLHCLHHLNPIPPAHPFP</sequence>
<organism>
    <name type="scientific">Rattus norvegicus</name>
    <name type="common">Rat</name>
    <dbReference type="NCBI Taxonomy" id="10116"/>
    <lineage>
        <taxon>Eukaryota</taxon>
        <taxon>Metazoa</taxon>
        <taxon>Chordata</taxon>
        <taxon>Craniata</taxon>
        <taxon>Vertebrata</taxon>
        <taxon>Euteleostomi</taxon>
        <taxon>Mammalia</taxon>
        <taxon>Eutheria</taxon>
        <taxon>Euarchontoglires</taxon>
        <taxon>Glires</taxon>
        <taxon>Rodentia</taxon>
        <taxon>Myomorpha</taxon>
        <taxon>Muroidea</taxon>
        <taxon>Muridae</taxon>
        <taxon>Murinae</taxon>
        <taxon>Rattus</taxon>
    </lineage>
</organism>
<dbReference type="EMBL" id="BC097444">
    <property type="protein sequence ID" value="AAH97444.1"/>
    <property type="molecule type" value="mRNA"/>
</dbReference>
<dbReference type="RefSeq" id="NP_001020073.1">
    <property type="nucleotide sequence ID" value="NM_001024902.1"/>
</dbReference>
<dbReference type="RefSeq" id="XP_006230626.1">
    <property type="nucleotide sequence ID" value="XM_006230564.5"/>
</dbReference>
<dbReference type="RefSeq" id="XP_006230627.1">
    <property type="nucleotide sequence ID" value="XM_006230565.5"/>
</dbReference>
<dbReference type="RefSeq" id="XP_006230628.1">
    <property type="nucleotide sequence ID" value="XM_006230566.3"/>
</dbReference>
<dbReference type="RefSeq" id="XP_038941318.1">
    <property type="nucleotide sequence ID" value="XM_039085390.2"/>
</dbReference>
<dbReference type="RefSeq" id="XP_063125803.1">
    <property type="nucleotide sequence ID" value="XM_063269733.1"/>
</dbReference>
<dbReference type="SMR" id="Q4V8C9"/>
<dbReference type="FunCoup" id="Q4V8C9">
    <property type="interactions" value="97"/>
</dbReference>
<dbReference type="STRING" id="10116.ENSRNOP00000022867"/>
<dbReference type="PhosphoSitePlus" id="Q4V8C9"/>
<dbReference type="PaxDb" id="10116-ENSRNOP00000022867"/>
<dbReference type="Ensembl" id="ENSRNOT00000022867.7">
    <property type="protein sequence ID" value="ENSRNOP00000022867.4"/>
    <property type="gene ID" value="ENSRNOG00000016697.8"/>
</dbReference>
<dbReference type="GeneID" id="365389"/>
<dbReference type="KEGG" id="rno:365389"/>
<dbReference type="UCSC" id="RGD:1311654">
    <property type="organism name" value="rat"/>
</dbReference>
<dbReference type="AGR" id="RGD:1311654"/>
<dbReference type="CTD" id="115399"/>
<dbReference type="RGD" id="1311654">
    <property type="gene designation" value="Lrrc56"/>
</dbReference>
<dbReference type="eggNOG" id="KOG0531">
    <property type="taxonomic scope" value="Eukaryota"/>
</dbReference>
<dbReference type="GeneTree" id="ENSGT00390000001545"/>
<dbReference type="InParanoid" id="Q4V8C9"/>
<dbReference type="OMA" id="NMLEMCV"/>
<dbReference type="OrthoDB" id="676979at2759"/>
<dbReference type="PhylomeDB" id="Q4V8C9"/>
<dbReference type="TreeFam" id="TF326690"/>
<dbReference type="PRO" id="PR:Q4V8C9"/>
<dbReference type="Proteomes" id="UP000002494">
    <property type="component" value="Chromosome 1"/>
</dbReference>
<dbReference type="Bgee" id="ENSRNOG00000016697">
    <property type="expression patterns" value="Expressed in testis and 19 other cell types or tissues"/>
</dbReference>
<dbReference type="ExpressionAtlas" id="Q4V8C9">
    <property type="expression patterns" value="baseline and differential"/>
</dbReference>
<dbReference type="GO" id="GO:0005929">
    <property type="term" value="C:cilium"/>
    <property type="evidence" value="ECO:0007669"/>
    <property type="project" value="UniProtKB-SubCell"/>
</dbReference>
<dbReference type="GO" id="GO:0030030">
    <property type="term" value="P:cell projection organization"/>
    <property type="evidence" value="ECO:0007669"/>
    <property type="project" value="UniProtKB-KW"/>
</dbReference>
<dbReference type="Gene3D" id="3.80.10.10">
    <property type="entry name" value="Ribonuclease Inhibitor"/>
    <property type="match status" value="1"/>
</dbReference>
<dbReference type="InterPro" id="IPR001611">
    <property type="entry name" value="Leu-rich_rpt"/>
</dbReference>
<dbReference type="InterPro" id="IPR025875">
    <property type="entry name" value="Leu-rich_rpt_4"/>
</dbReference>
<dbReference type="InterPro" id="IPR032675">
    <property type="entry name" value="LRR_dom_sf"/>
</dbReference>
<dbReference type="InterPro" id="IPR040091">
    <property type="entry name" value="LRRC56"/>
</dbReference>
<dbReference type="PANTHER" id="PTHR22708">
    <property type="entry name" value="LEUCINE-RICH REPEAT-CONTAINING PROTEIN 56"/>
    <property type="match status" value="1"/>
</dbReference>
<dbReference type="PANTHER" id="PTHR22708:SF0">
    <property type="entry name" value="LEUCINE-RICH REPEAT-CONTAINING PROTEIN 56"/>
    <property type="match status" value="1"/>
</dbReference>
<dbReference type="Pfam" id="PF12799">
    <property type="entry name" value="LRR_4"/>
    <property type="match status" value="1"/>
</dbReference>
<dbReference type="SUPFAM" id="SSF52058">
    <property type="entry name" value="L domain-like"/>
    <property type="match status" value="1"/>
</dbReference>
<dbReference type="PROSITE" id="PS51450">
    <property type="entry name" value="LRR"/>
    <property type="match status" value="4"/>
</dbReference>
<name>LRC56_RAT</name>
<gene>
    <name type="primary">Lrrc56</name>
</gene>
<reference key="1">
    <citation type="journal article" date="2004" name="Genome Res.">
        <title>The status, quality, and expansion of the NIH full-length cDNA project: the Mammalian Gene Collection (MGC).</title>
        <authorList>
            <consortium name="The MGC Project Team"/>
        </authorList>
    </citation>
    <scope>NUCLEOTIDE SEQUENCE [LARGE SCALE MRNA]</scope>
    <source>
        <tissue>Testis</tissue>
    </source>
</reference>
<evidence type="ECO:0000250" key="1">
    <source>
        <dbReference type="UniProtKB" id="Q387Y5"/>
    </source>
</evidence>
<evidence type="ECO:0000250" key="2">
    <source>
        <dbReference type="UniProtKB" id="Q8IYG6"/>
    </source>
</evidence>
<evidence type="ECO:0000256" key="3">
    <source>
        <dbReference type="SAM" id="MobiDB-lite"/>
    </source>
</evidence>
<evidence type="ECO:0000305" key="4"/>
<protein>
    <recommendedName>
        <fullName>Leucine-rich repeat-containing protein 56</fullName>
    </recommendedName>
</protein>
<proteinExistence type="evidence at transcript level"/>
<feature type="chain" id="PRO_0000229925" description="Leucine-rich repeat-containing protein 56">
    <location>
        <begin position="1"/>
        <end position="548"/>
    </location>
</feature>
<feature type="repeat" description="LRR 1">
    <location>
        <begin position="94"/>
        <end position="115"/>
    </location>
</feature>
<feature type="repeat" description="LRR 2">
    <location>
        <begin position="117"/>
        <end position="138"/>
    </location>
</feature>
<feature type="repeat" description="LRR 3">
    <location>
        <begin position="139"/>
        <end position="160"/>
    </location>
</feature>
<feature type="repeat" description="LRR 4">
    <location>
        <begin position="161"/>
        <end position="182"/>
    </location>
</feature>
<feature type="repeat" description="LRR 5">
    <location>
        <begin position="186"/>
        <end position="206"/>
    </location>
</feature>
<feature type="domain" description="LRRCT">
    <location>
        <begin position="207"/>
        <end position="249"/>
    </location>
</feature>
<feature type="region of interest" description="Disordered" evidence="3">
    <location>
        <begin position="405"/>
        <end position="433"/>
    </location>
</feature>
<accession>Q4V8C9</accession>